<dbReference type="SMR" id="P58197"/>
<dbReference type="FunCoup" id="P58197">
    <property type="interactions" value="74"/>
</dbReference>
<dbReference type="IntAct" id="P58197">
    <property type="interactions" value="2"/>
</dbReference>
<dbReference type="MINT" id="P58197"/>
<dbReference type="STRING" id="10116.ENSRNOP00000040925"/>
<dbReference type="PhosphoSitePlus" id="P58197"/>
<dbReference type="PaxDb" id="10116-ENSRNOP00000040925"/>
<dbReference type="AGR" id="RGD:1310267"/>
<dbReference type="RGD" id="1310267">
    <property type="gene designation" value="Tfap2a"/>
</dbReference>
<dbReference type="eggNOG" id="KOG3811">
    <property type="taxonomic scope" value="Eukaryota"/>
</dbReference>
<dbReference type="InParanoid" id="P58197"/>
<dbReference type="PhylomeDB" id="P58197"/>
<dbReference type="Reactome" id="R-RNO-8864260">
    <property type="pathway name" value="Transcriptional regulation by the AP-2 (TFAP2) family of transcription factors"/>
</dbReference>
<dbReference type="Reactome" id="R-RNO-8866904">
    <property type="pathway name" value="Negative regulation of activity of TFAP2 (AP-2) family transcription factors"/>
</dbReference>
<dbReference type="Reactome" id="R-RNO-8866907">
    <property type="pathway name" value="Activation of the TFAP2 (AP-2) family of transcription factors"/>
</dbReference>
<dbReference type="Reactome" id="R-RNO-8869496">
    <property type="pathway name" value="TFAP2A acts as a transcriptional repressor during retinoic acid induced cell differentiation"/>
</dbReference>
<dbReference type="Reactome" id="R-RNO-9834899">
    <property type="pathway name" value="Specification of the neural plate border"/>
</dbReference>
<dbReference type="PRO" id="PR:P58197"/>
<dbReference type="Proteomes" id="UP000002494">
    <property type="component" value="Unplaced"/>
</dbReference>
<dbReference type="GO" id="GO:0005905">
    <property type="term" value="C:clathrin-coated pit"/>
    <property type="evidence" value="ECO:0000266"/>
    <property type="project" value="RGD"/>
</dbReference>
<dbReference type="GO" id="GO:0005634">
    <property type="term" value="C:nucleus"/>
    <property type="evidence" value="ECO:0000266"/>
    <property type="project" value="RGD"/>
</dbReference>
<dbReference type="GO" id="GO:0003682">
    <property type="term" value="F:chromatin binding"/>
    <property type="evidence" value="ECO:0000250"/>
    <property type="project" value="UniProtKB"/>
</dbReference>
<dbReference type="GO" id="GO:0000987">
    <property type="term" value="F:cis-regulatory region sequence-specific DNA binding"/>
    <property type="evidence" value="ECO:0000266"/>
    <property type="project" value="RGD"/>
</dbReference>
<dbReference type="GO" id="GO:0003677">
    <property type="term" value="F:DNA binding"/>
    <property type="evidence" value="ECO:0000266"/>
    <property type="project" value="RGD"/>
</dbReference>
<dbReference type="GO" id="GO:0001228">
    <property type="term" value="F:DNA-binding transcription activator activity, RNA polymerase II-specific"/>
    <property type="evidence" value="ECO:0000250"/>
    <property type="project" value="UniProtKB"/>
</dbReference>
<dbReference type="GO" id="GO:0003700">
    <property type="term" value="F:DNA-binding transcription factor activity"/>
    <property type="evidence" value="ECO:0000266"/>
    <property type="project" value="RGD"/>
</dbReference>
<dbReference type="GO" id="GO:0000981">
    <property type="term" value="F:DNA-binding transcription factor activity, RNA polymerase II-specific"/>
    <property type="evidence" value="ECO:0000250"/>
    <property type="project" value="UniProtKB"/>
</dbReference>
<dbReference type="GO" id="GO:0001227">
    <property type="term" value="F:DNA-binding transcription repressor activity, RNA polymerase II-specific"/>
    <property type="evidence" value="ECO:0000250"/>
    <property type="project" value="UniProtKB"/>
</dbReference>
<dbReference type="GO" id="GO:0042802">
    <property type="term" value="F:identical protein binding"/>
    <property type="evidence" value="ECO:0000266"/>
    <property type="project" value="RGD"/>
</dbReference>
<dbReference type="GO" id="GO:0000978">
    <property type="term" value="F:RNA polymerase II cis-regulatory region sequence-specific DNA binding"/>
    <property type="evidence" value="ECO:0000250"/>
    <property type="project" value="UniProtKB"/>
</dbReference>
<dbReference type="GO" id="GO:0000977">
    <property type="term" value="F:RNA polymerase II transcription regulatory region sequence-specific DNA binding"/>
    <property type="evidence" value="ECO:0000266"/>
    <property type="project" value="RGD"/>
</dbReference>
<dbReference type="GO" id="GO:0043565">
    <property type="term" value="F:sequence-specific DNA binding"/>
    <property type="evidence" value="ECO:0000266"/>
    <property type="project" value="RGD"/>
</dbReference>
<dbReference type="GO" id="GO:1990837">
    <property type="term" value="F:sequence-specific double-stranded DNA binding"/>
    <property type="evidence" value="ECO:0000266"/>
    <property type="project" value="RGD"/>
</dbReference>
<dbReference type="GO" id="GO:0000976">
    <property type="term" value="F:transcription cis-regulatory region binding"/>
    <property type="evidence" value="ECO:0000250"/>
    <property type="project" value="UniProtKB"/>
</dbReference>
<dbReference type="GO" id="GO:0003713">
    <property type="term" value="F:transcription coactivator activity"/>
    <property type="evidence" value="ECO:0000266"/>
    <property type="project" value="RGD"/>
</dbReference>
<dbReference type="GO" id="GO:0003714">
    <property type="term" value="F:transcription corepressor activity"/>
    <property type="evidence" value="ECO:0000266"/>
    <property type="project" value="RGD"/>
</dbReference>
<dbReference type="GO" id="GO:0021506">
    <property type="term" value="P:anterior neuropore closure"/>
    <property type="evidence" value="ECO:0000266"/>
    <property type="project" value="RGD"/>
</dbReference>
<dbReference type="GO" id="GO:0071711">
    <property type="term" value="P:basement membrane organization"/>
    <property type="evidence" value="ECO:0000266"/>
    <property type="project" value="RGD"/>
</dbReference>
<dbReference type="GO" id="GO:0060349">
    <property type="term" value="P:bone morphogenesis"/>
    <property type="evidence" value="ECO:0000250"/>
    <property type="project" value="UniProtKB"/>
</dbReference>
<dbReference type="GO" id="GO:0008283">
    <property type="term" value="P:cell population proliferation"/>
    <property type="evidence" value="ECO:0000266"/>
    <property type="project" value="RGD"/>
</dbReference>
<dbReference type="GO" id="GO:0071281">
    <property type="term" value="P:cellular response to iron ion"/>
    <property type="evidence" value="ECO:0000250"/>
    <property type="project" value="UniProtKB"/>
</dbReference>
<dbReference type="GO" id="GO:0061303">
    <property type="term" value="P:cornea development in camera-type eye"/>
    <property type="evidence" value="ECO:0000266"/>
    <property type="project" value="RGD"/>
</dbReference>
<dbReference type="GO" id="GO:0010172">
    <property type="term" value="P:embryonic body morphogenesis"/>
    <property type="evidence" value="ECO:0000266"/>
    <property type="project" value="RGD"/>
</dbReference>
<dbReference type="GO" id="GO:0048596">
    <property type="term" value="P:embryonic camera-type eye morphogenesis"/>
    <property type="evidence" value="ECO:0000266"/>
    <property type="project" value="RGD"/>
</dbReference>
<dbReference type="GO" id="GO:0048701">
    <property type="term" value="P:embryonic cranial skeleton morphogenesis"/>
    <property type="evidence" value="ECO:0000250"/>
    <property type="project" value="UniProtKB"/>
</dbReference>
<dbReference type="GO" id="GO:0035115">
    <property type="term" value="P:embryonic forelimb morphogenesis"/>
    <property type="evidence" value="ECO:0000250"/>
    <property type="project" value="UniProtKB"/>
</dbReference>
<dbReference type="GO" id="GO:0009880">
    <property type="term" value="P:embryonic pattern specification"/>
    <property type="evidence" value="ECO:0000266"/>
    <property type="project" value="RGD"/>
</dbReference>
<dbReference type="GO" id="GO:0007173">
    <property type="term" value="P:epidermal growth factor receptor signaling pathway"/>
    <property type="evidence" value="ECO:0000266"/>
    <property type="project" value="RGD"/>
</dbReference>
<dbReference type="GO" id="GO:0048730">
    <property type="term" value="P:epidermis morphogenesis"/>
    <property type="evidence" value="ECO:0000266"/>
    <property type="project" value="RGD"/>
</dbReference>
<dbReference type="GO" id="GO:0061029">
    <property type="term" value="P:eyelid development in camera-type eye"/>
    <property type="evidence" value="ECO:0000250"/>
    <property type="project" value="UniProtKB"/>
</dbReference>
<dbReference type="GO" id="GO:0060325">
    <property type="term" value="P:face morphogenesis"/>
    <property type="evidence" value="ECO:0000266"/>
    <property type="project" value="RGD"/>
</dbReference>
<dbReference type="GO" id="GO:0010761">
    <property type="term" value="P:fibroblast migration"/>
    <property type="evidence" value="ECO:0000266"/>
    <property type="project" value="RGD"/>
</dbReference>
<dbReference type="GO" id="GO:0021884">
    <property type="term" value="P:forebrain neuron development"/>
    <property type="evidence" value="ECO:0000266"/>
    <property type="project" value="RGD"/>
</dbReference>
<dbReference type="GO" id="GO:0035136">
    <property type="term" value="P:forelimb morphogenesis"/>
    <property type="evidence" value="ECO:0000266"/>
    <property type="project" value="RGD"/>
</dbReference>
<dbReference type="GO" id="GO:0042472">
    <property type="term" value="P:inner ear morphogenesis"/>
    <property type="evidence" value="ECO:0000250"/>
    <property type="project" value="UniProtKB"/>
</dbReference>
<dbReference type="GO" id="GO:0003334">
    <property type="term" value="P:keratinocyte development"/>
    <property type="evidence" value="ECO:0000266"/>
    <property type="project" value="RGD"/>
</dbReference>
<dbReference type="GO" id="GO:0001822">
    <property type="term" value="P:kidney development"/>
    <property type="evidence" value="ECO:0000250"/>
    <property type="project" value="UniProtKB"/>
</dbReference>
<dbReference type="GO" id="GO:0060235">
    <property type="term" value="P:lens induction in camera-type eye"/>
    <property type="evidence" value="ECO:0000266"/>
    <property type="project" value="RGD"/>
</dbReference>
<dbReference type="GO" id="GO:0002089">
    <property type="term" value="P:lens morphogenesis in camera-type eye"/>
    <property type="evidence" value="ECO:0000266"/>
    <property type="project" value="RGD"/>
</dbReference>
<dbReference type="GO" id="GO:0072210">
    <property type="term" value="P:metanephric nephron development"/>
    <property type="evidence" value="ECO:0000266"/>
    <property type="project" value="RGD"/>
</dbReference>
<dbReference type="GO" id="GO:0043066">
    <property type="term" value="P:negative regulation of apoptotic process"/>
    <property type="evidence" value="ECO:0000250"/>
    <property type="project" value="UniProtKB"/>
</dbReference>
<dbReference type="GO" id="GO:0008285">
    <property type="term" value="P:negative regulation of cell population proliferation"/>
    <property type="evidence" value="ECO:0000266"/>
    <property type="project" value="RGD"/>
</dbReference>
<dbReference type="GO" id="GO:0045892">
    <property type="term" value="P:negative regulation of DNA-templated transcription"/>
    <property type="evidence" value="ECO:0000266"/>
    <property type="project" value="RGD"/>
</dbReference>
<dbReference type="GO" id="GO:0042059">
    <property type="term" value="P:negative regulation of epidermal growth factor receptor signaling pathway"/>
    <property type="evidence" value="ECO:0000266"/>
    <property type="project" value="RGD"/>
</dbReference>
<dbReference type="GO" id="GO:0043524">
    <property type="term" value="P:negative regulation of neuron apoptotic process"/>
    <property type="evidence" value="ECO:0000266"/>
    <property type="project" value="RGD"/>
</dbReference>
<dbReference type="GO" id="GO:2000378">
    <property type="term" value="P:negative regulation of reactive oxygen species metabolic process"/>
    <property type="evidence" value="ECO:0000250"/>
    <property type="project" value="UniProtKB"/>
</dbReference>
<dbReference type="GO" id="GO:0010944">
    <property type="term" value="P:negative regulation of transcription by competitive promoter binding"/>
    <property type="evidence" value="ECO:0000250"/>
    <property type="project" value="UniProtKB"/>
</dbReference>
<dbReference type="GO" id="GO:0000122">
    <property type="term" value="P:negative regulation of transcription by RNA polymerase II"/>
    <property type="evidence" value="ECO:0000250"/>
    <property type="project" value="UniProtKB"/>
</dbReference>
<dbReference type="GO" id="GO:0007399">
    <property type="term" value="P:nervous system development"/>
    <property type="evidence" value="ECO:0000266"/>
    <property type="project" value="RGD"/>
</dbReference>
<dbReference type="GO" id="GO:0014032">
    <property type="term" value="P:neural crest cell development"/>
    <property type="evidence" value="ECO:0000266"/>
    <property type="project" value="RGD"/>
</dbReference>
<dbReference type="GO" id="GO:0001843">
    <property type="term" value="P:neural tube closure"/>
    <property type="evidence" value="ECO:0000266"/>
    <property type="project" value="RGD"/>
</dbReference>
<dbReference type="GO" id="GO:0051402">
    <property type="term" value="P:neuron apoptotic process"/>
    <property type="evidence" value="ECO:0000266"/>
    <property type="project" value="RGD"/>
</dbReference>
<dbReference type="GO" id="GO:0021623">
    <property type="term" value="P:oculomotor nerve formation"/>
    <property type="evidence" value="ECO:0000250"/>
    <property type="project" value="UniProtKB"/>
</dbReference>
<dbReference type="GO" id="GO:0003409">
    <property type="term" value="P:optic cup structural organization"/>
    <property type="evidence" value="ECO:0000250"/>
    <property type="project" value="UniProtKB"/>
</dbReference>
<dbReference type="GO" id="GO:0003404">
    <property type="term" value="P:optic vesicle morphogenesis"/>
    <property type="evidence" value="ECO:0000250"/>
    <property type="project" value="UniProtKB"/>
</dbReference>
<dbReference type="GO" id="GO:0003151">
    <property type="term" value="P:outflow tract morphogenesis"/>
    <property type="evidence" value="ECO:0000266"/>
    <property type="project" value="RGD"/>
</dbReference>
<dbReference type="GO" id="GO:0030501">
    <property type="term" value="P:positive regulation of bone mineralization"/>
    <property type="evidence" value="ECO:0000250"/>
    <property type="project" value="UniProtKB"/>
</dbReference>
<dbReference type="GO" id="GO:0045893">
    <property type="term" value="P:positive regulation of DNA-templated transcription"/>
    <property type="evidence" value="ECO:0000250"/>
    <property type="project" value="UniProtKB"/>
</dbReference>
<dbReference type="GO" id="GO:0010763">
    <property type="term" value="P:positive regulation of fibroblast migration"/>
    <property type="evidence" value="ECO:0000266"/>
    <property type="project" value="RGD"/>
</dbReference>
<dbReference type="GO" id="GO:0010628">
    <property type="term" value="P:positive regulation of gene expression"/>
    <property type="evidence" value="ECO:0000250"/>
    <property type="project" value="UniProtKB"/>
</dbReference>
<dbReference type="GO" id="GO:0043525">
    <property type="term" value="P:positive regulation of neuron apoptotic process"/>
    <property type="evidence" value="ECO:0000266"/>
    <property type="project" value="RGD"/>
</dbReference>
<dbReference type="GO" id="GO:0070172">
    <property type="term" value="P:positive regulation of tooth mineralization"/>
    <property type="evidence" value="ECO:0000250"/>
    <property type="project" value="UniProtKB"/>
</dbReference>
<dbReference type="GO" id="GO:0045944">
    <property type="term" value="P:positive regulation of transcription by RNA polymerase II"/>
    <property type="evidence" value="ECO:0000315"/>
    <property type="project" value="RGD"/>
</dbReference>
<dbReference type="GO" id="GO:0045595">
    <property type="term" value="P:regulation of cell differentiation"/>
    <property type="evidence" value="ECO:0000266"/>
    <property type="project" value="RGD"/>
</dbReference>
<dbReference type="GO" id="GO:0042127">
    <property type="term" value="P:regulation of cell population proliferation"/>
    <property type="evidence" value="ECO:0000318"/>
    <property type="project" value="GO_Central"/>
</dbReference>
<dbReference type="GO" id="GO:0006355">
    <property type="term" value="P:regulation of DNA-templated transcription"/>
    <property type="evidence" value="ECO:0000266"/>
    <property type="project" value="RGD"/>
</dbReference>
<dbReference type="GO" id="GO:0045664">
    <property type="term" value="P:regulation of neuron differentiation"/>
    <property type="evidence" value="ECO:0000266"/>
    <property type="project" value="RGD"/>
</dbReference>
<dbReference type="GO" id="GO:0006357">
    <property type="term" value="P:regulation of transcription by RNA polymerase II"/>
    <property type="evidence" value="ECO:0000266"/>
    <property type="project" value="RGD"/>
</dbReference>
<dbReference type="GO" id="GO:0032496">
    <property type="term" value="P:response to lipopolysaccharide"/>
    <property type="evidence" value="ECO:0000314"/>
    <property type="project" value="RGD"/>
</dbReference>
<dbReference type="GO" id="GO:0010842">
    <property type="term" value="P:retina layer formation"/>
    <property type="evidence" value="ECO:0000266"/>
    <property type="project" value="RGD"/>
</dbReference>
<dbReference type="GO" id="GO:0060021">
    <property type="term" value="P:roof of mouth development"/>
    <property type="evidence" value="ECO:0000250"/>
    <property type="project" value="UniProtKB"/>
</dbReference>
<dbReference type="GO" id="GO:0014044">
    <property type="term" value="P:Schwann cell development"/>
    <property type="evidence" value="ECO:0000270"/>
    <property type="project" value="RGD"/>
</dbReference>
<dbReference type="GO" id="GO:0007423">
    <property type="term" value="P:sensory organ development"/>
    <property type="evidence" value="ECO:0000266"/>
    <property type="project" value="RGD"/>
</dbReference>
<dbReference type="GO" id="GO:0007605">
    <property type="term" value="P:sensory perception of sound"/>
    <property type="evidence" value="ECO:0000250"/>
    <property type="project" value="UniProtKB"/>
</dbReference>
<dbReference type="GO" id="GO:0001501">
    <property type="term" value="P:skeletal system development"/>
    <property type="evidence" value="ECO:0000318"/>
    <property type="project" value="GO_Central"/>
</dbReference>
<dbReference type="GO" id="GO:0048705">
    <property type="term" value="P:skeletal system morphogenesis"/>
    <property type="evidence" value="ECO:0000266"/>
    <property type="project" value="RGD"/>
</dbReference>
<dbReference type="GO" id="GO:0043588">
    <property type="term" value="P:skin development"/>
    <property type="evidence" value="ECO:0000266"/>
    <property type="project" value="RGD"/>
</dbReference>
<dbReference type="GO" id="GO:0048485">
    <property type="term" value="P:sympathetic nervous system development"/>
    <property type="evidence" value="ECO:0000266"/>
    <property type="project" value="RGD"/>
</dbReference>
<dbReference type="GO" id="GO:0006366">
    <property type="term" value="P:transcription by RNA polymerase II"/>
    <property type="evidence" value="ECO:0000266"/>
    <property type="project" value="RGD"/>
</dbReference>
<dbReference type="GO" id="GO:0021559">
    <property type="term" value="P:trigeminal nerve development"/>
    <property type="evidence" value="ECO:0000250"/>
    <property type="project" value="UniProtKB"/>
</dbReference>
<dbReference type="InterPro" id="IPR004979">
    <property type="entry name" value="TF_AP2"/>
</dbReference>
<dbReference type="InterPro" id="IPR008121">
    <property type="entry name" value="TF_AP2_alpha_N"/>
</dbReference>
<dbReference type="InterPro" id="IPR013854">
    <property type="entry name" value="TF_AP2_C"/>
</dbReference>
<dbReference type="PANTHER" id="PTHR10812">
    <property type="entry name" value="TRANSCRIPTION FACTOR AP-2"/>
    <property type="match status" value="1"/>
</dbReference>
<dbReference type="PANTHER" id="PTHR10812:SF8">
    <property type="entry name" value="TRANSCRIPTION FACTOR AP-2-ALPHA"/>
    <property type="match status" value="1"/>
</dbReference>
<dbReference type="Pfam" id="PF03299">
    <property type="entry name" value="TF_AP-2"/>
    <property type="match status" value="1"/>
</dbReference>
<dbReference type="PRINTS" id="PR01749">
    <property type="entry name" value="AP2ATNSCPFCT"/>
</dbReference>
<dbReference type="PRINTS" id="PR01748">
    <property type="entry name" value="AP2TNSCPFCT"/>
</dbReference>
<comment type="function">
    <text evidence="1">Sequence-specific DNA-binding protein that interacts with inducible viral and cellular enhancer elements to regulate transcription of selected genes. AP-2 factors bind to the consensus sequence 5'-GCCNNNGGC-3' and activate genes involved in a large spectrum of important biological functions including proper eye, face, body wall, limb and neural tube development. They also suppress a number of genes including MCAM/MUC18, C/EBP alpha and c-Myc. AP-2-alpha is the only AP-2 protein required for early morphogenesis of the lens vesicle. Together with the CITED2 coactivator, stimulates the PITX2 P1 promoter transcription activation. Associates with chromatin to the PITX2 P1 promoter region (By similarity).</text>
</comment>
<comment type="subunit">
    <text evidence="1">Binds DNA as a dimer. Can form homodimers or heterodimers with other AP-2 family members. Interacts with WWOX. Interacts with CITED4. Interacts with UBE2I. Interacts with RALBP1 in a complex also containing EPN1 and NUMB during interphase and mitosis. Interacts with KCTD1; this interaction represses transcription activation. Interacts (via C-terminus) with CITED2 (via C-terminus); the interaction stimulates TFAP2A-transcriptional activation. Interacts (via N-terminus) with EP300 (via N-terminus); the interaction requires CITED2 (By similarity). Interacts with KCTD15; this interaction inhibits TFAP2A transcriptional activation (By similarity).</text>
</comment>
<comment type="interaction">
    <interactant intactId="EBI-7069641">
        <id>P58197</id>
    </interactant>
    <interactant intactId="EBI-7121510">
        <id>P49418</id>
        <label>AMPH</label>
    </interactant>
    <organismsDiffer>true</organismsDiffer>
    <experiments>2</experiments>
</comment>
<comment type="subcellular location">
    <subcellularLocation>
        <location>Nucleus</location>
    </subcellularLocation>
</comment>
<comment type="tissue specificity">
    <text>In the brain, highly expressed in the hippocampus, hypothalamus and cerebral cortex.</text>
</comment>
<comment type="induction">
    <text>During retinoic acid-mediated differentiation and by nerve growth factor (NGF). Inhibited by the antidepressants, citalopram and imipramin.</text>
</comment>
<comment type="domain">
    <text evidence="1">The PPxY motif mediates interaction with WWOX.</text>
</comment>
<comment type="PTM">
    <text evidence="1">Sumoylated on Lys-10; which inhibits transcriptional activity.</text>
</comment>
<comment type="miscellaneous">
    <text>The antidepressants, citalopram, imipramin and lithium-chloride decrease the DNA-binding activity.</text>
</comment>
<comment type="similarity">
    <text evidence="4">Belongs to the AP-2 family.</text>
</comment>
<feature type="chain" id="PRO_0000184798" description="Transcription factor AP-2-alpha">
    <location>
        <begin position="1"/>
        <end position="437"/>
    </location>
</feature>
<feature type="region of interest" description="Disordered" evidence="3">
    <location>
        <begin position="14"/>
        <end position="107"/>
    </location>
</feature>
<feature type="region of interest" description="H-S-H (helix-span-helix), dimerization" evidence="2">
    <location>
        <begin position="280"/>
        <end position="410"/>
    </location>
</feature>
<feature type="region of interest" description="Disordered" evidence="3">
    <location>
        <begin position="414"/>
        <end position="437"/>
    </location>
</feature>
<feature type="short sequence motif" description="PPxY motif">
    <location>
        <begin position="57"/>
        <end position="62"/>
    </location>
</feature>
<feature type="compositionally biased region" description="Low complexity" evidence="3">
    <location>
        <begin position="65"/>
        <end position="74"/>
    </location>
</feature>
<feature type="compositionally biased region" description="Low complexity" evidence="3">
    <location>
        <begin position="88"/>
        <end position="101"/>
    </location>
</feature>
<feature type="compositionally biased region" description="Polar residues" evidence="3">
    <location>
        <begin position="414"/>
        <end position="427"/>
    </location>
</feature>
<feature type="compositionally biased region" description="Basic and acidic residues" evidence="3">
    <location>
        <begin position="428"/>
        <end position="437"/>
    </location>
</feature>
<feature type="modified residue" description="Phosphoserine; by PKA" evidence="2">
    <location>
        <position position="239"/>
    </location>
</feature>
<feature type="cross-link" description="Glycyl lysine isopeptide (Lys-Gly) (interchain with G-Cter in SUMO); alternate" evidence="1">
    <location>
        <position position="10"/>
    </location>
</feature>
<feature type="cross-link" description="Glycyl lysine isopeptide (Lys-Gly) (interchain with G-Cter in SUMO2); alternate" evidence="2">
    <location>
        <position position="10"/>
    </location>
</feature>
<feature type="cross-link" description="Glycyl lysine isopeptide (Lys-Gly) (interchain with G-Cter in SUMO2)" evidence="2">
    <location>
        <position position="177"/>
    </location>
</feature>
<feature type="cross-link" description="Glycyl lysine isopeptide (Lys-Gly) (interchain with G-Cter in SUMO2)" evidence="2">
    <location>
        <position position="184"/>
    </location>
</feature>
<sequence length="437" mass="47947">MLWKLTDNIKYEDCEDRHDGTSNGTARLPQLGTVGQSPYTSAPPLSHTPNADFQPPYFPPPYQPIYPQSQDPYSHVNDPYSLNPLHAQPQPQHPGWPGQRQSQESGLLHTHRGLPHQLSGLDPRRDYRRHEDLLHGPHGLGSGLGDLPIHSLPHAIEDVPHVEDPGINIPDQTVIKKGPVSLSKSNSNAVSAIPINKDNLFGGVVNPNEVFCSVPGRLSLLSSTSKYKVTVAEVQRRLSSPECLNASLLGGVLRRAKSKNGGRSLREKLDKIGLNLPAGRRKAANVTLLTSLVEGEAVHLARDFGYVCETEFPAKAVAEFLNRQHSDPNEQVARKNMLLATKQICKEFTDLLAQDRSPLGNSRPNPILEPGIQSCLTHFNLISHGFGSPAVCAAVTALQNYLTEALKAMDKMYLSNNPNSHTDNSAKSSDKEEKHRK</sequence>
<name>AP2A_RAT</name>
<reference key="1">
    <citation type="journal article" date="2000" name="Mol. Endocrinol.">
        <title>Molecular cloning, expression, and characterization of rat homolog of human AP-2alpha that stimulates neuropeptide Y transcription activity in response to nerve growth factor.</title>
        <authorList>
            <person name="Li B.-S."/>
            <person name="Kramer P.R."/>
            <person name="Zhao W."/>
            <person name="Ma W."/>
            <person name="Stenger D.A."/>
            <person name="Zhang L."/>
        </authorList>
    </citation>
    <scope>NUCLEOTIDE SEQUENCE [MRNA]</scope>
    <source>
        <tissue>Brain</tissue>
    </source>
</reference>
<reference key="2">
    <citation type="journal article" date="2000" name="Life Sci.">
        <title>Chronic pharmacological treatment with certain antidepressants alters the expression and DNA-binding activity of transcription factor AP-2.</title>
        <authorList>
            <person name="Damberg M."/>
            <person name="Ekblom J."/>
            <person name="Oreland L."/>
        </authorList>
    </citation>
    <scope>EFFECT OF ANTIDEPRESSANTS</scope>
</reference>
<accession>P58197</accession>
<organism>
    <name type="scientific">Rattus norvegicus</name>
    <name type="common">Rat</name>
    <dbReference type="NCBI Taxonomy" id="10116"/>
    <lineage>
        <taxon>Eukaryota</taxon>
        <taxon>Metazoa</taxon>
        <taxon>Chordata</taxon>
        <taxon>Craniata</taxon>
        <taxon>Vertebrata</taxon>
        <taxon>Euteleostomi</taxon>
        <taxon>Mammalia</taxon>
        <taxon>Eutheria</taxon>
        <taxon>Euarchontoglires</taxon>
        <taxon>Glires</taxon>
        <taxon>Rodentia</taxon>
        <taxon>Myomorpha</taxon>
        <taxon>Muroidea</taxon>
        <taxon>Muridae</taxon>
        <taxon>Murinae</taxon>
        <taxon>Rattus</taxon>
    </lineage>
</organism>
<proteinExistence type="evidence at protein level"/>
<keyword id="KW-0010">Activator</keyword>
<keyword id="KW-0238">DNA-binding</keyword>
<keyword id="KW-1017">Isopeptide bond</keyword>
<keyword id="KW-0539">Nucleus</keyword>
<keyword id="KW-0597">Phosphoprotein</keyword>
<keyword id="KW-1185">Reference proteome</keyword>
<keyword id="KW-0804">Transcription</keyword>
<keyword id="KW-0805">Transcription regulation</keyword>
<keyword id="KW-0832">Ubl conjugation</keyword>
<evidence type="ECO:0000250" key="1"/>
<evidence type="ECO:0000250" key="2">
    <source>
        <dbReference type="UniProtKB" id="P05549"/>
    </source>
</evidence>
<evidence type="ECO:0000256" key="3">
    <source>
        <dbReference type="SAM" id="MobiDB-lite"/>
    </source>
</evidence>
<evidence type="ECO:0000305" key="4"/>
<protein>
    <recommendedName>
        <fullName>Transcription factor AP-2-alpha</fullName>
        <shortName>AP2-alpha</shortName>
    </recommendedName>
    <alternativeName>
        <fullName>AP-2 transcription factor</fullName>
    </alternativeName>
    <alternativeName>
        <fullName>Activating enhancer-binding protein 2-alpha</fullName>
    </alternativeName>
    <alternativeName>
        <fullName>Activator protein 2</fullName>
        <shortName>AP-2</shortName>
    </alternativeName>
</protein>
<gene>
    <name type="primary">Tfap2a</name>
    <name type="synonym">Tcfap2a</name>
</gene>